<protein>
    <recommendedName>
        <fullName evidence="1">Endoribonuclease YbeY</fullName>
        <ecNumber evidence="1">3.1.-.-</ecNumber>
    </recommendedName>
</protein>
<reference key="1">
    <citation type="journal article" date="2008" name="Appl. Environ. Microbiol.">
        <title>The genome of Polaromonas sp. strain JS666: insights into the evolution of a hydrocarbon- and xenobiotic-degrading bacterium, and features of relevance to biotechnology.</title>
        <authorList>
            <person name="Mattes T.E."/>
            <person name="Alexander A.K."/>
            <person name="Richardson P.M."/>
            <person name="Munk A.C."/>
            <person name="Han C.S."/>
            <person name="Stothard P."/>
            <person name="Coleman N.V."/>
        </authorList>
    </citation>
    <scope>NUCLEOTIDE SEQUENCE [LARGE SCALE GENOMIC DNA]</scope>
    <source>
        <strain>JS666 / ATCC BAA-500</strain>
    </source>
</reference>
<organism>
    <name type="scientific">Polaromonas sp. (strain JS666 / ATCC BAA-500)</name>
    <dbReference type="NCBI Taxonomy" id="296591"/>
    <lineage>
        <taxon>Bacteria</taxon>
        <taxon>Pseudomonadati</taxon>
        <taxon>Pseudomonadota</taxon>
        <taxon>Betaproteobacteria</taxon>
        <taxon>Burkholderiales</taxon>
        <taxon>Comamonadaceae</taxon>
        <taxon>Polaromonas</taxon>
    </lineage>
</organism>
<evidence type="ECO:0000255" key="1">
    <source>
        <dbReference type="HAMAP-Rule" id="MF_00009"/>
    </source>
</evidence>
<keyword id="KW-0963">Cytoplasm</keyword>
<keyword id="KW-0255">Endonuclease</keyword>
<keyword id="KW-0378">Hydrolase</keyword>
<keyword id="KW-0479">Metal-binding</keyword>
<keyword id="KW-0540">Nuclease</keyword>
<keyword id="KW-1185">Reference proteome</keyword>
<keyword id="KW-0690">Ribosome biogenesis</keyword>
<keyword id="KW-0698">rRNA processing</keyword>
<keyword id="KW-0862">Zinc</keyword>
<sequence length="154" mass="17643">MAPDVPLRQLDLSLQFGQFPGVARHRAALPRRRVQRWISHALKTDAEITVRIVDAEEGQSLNRDYRRKDYATNVLTFDYTREPVVTADLVLCAPVVEREAREQGKTLEAHYAHLLVHATLHAQGYDHETNERDALEMEALEILLLASLRFANPY</sequence>
<proteinExistence type="inferred from homology"/>
<feature type="chain" id="PRO_0000284268" description="Endoribonuclease YbeY">
    <location>
        <begin position="1"/>
        <end position="154"/>
    </location>
</feature>
<feature type="binding site" evidence="1">
    <location>
        <position position="117"/>
    </location>
    <ligand>
        <name>Zn(2+)</name>
        <dbReference type="ChEBI" id="CHEBI:29105"/>
        <note>catalytic</note>
    </ligand>
</feature>
<feature type="binding site" evidence="1">
    <location>
        <position position="121"/>
    </location>
    <ligand>
        <name>Zn(2+)</name>
        <dbReference type="ChEBI" id="CHEBI:29105"/>
        <note>catalytic</note>
    </ligand>
</feature>
<feature type="binding site" evidence="1">
    <location>
        <position position="127"/>
    </location>
    <ligand>
        <name>Zn(2+)</name>
        <dbReference type="ChEBI" id="CHEBI:29105"/>
        <note>catalytic</note>
    </ligand>
</feature>
<accession>Q124Q3</accession>
<gene>
    <name evidence="1" type="primary">ybeY</name>
    <name type="ordered locus">Bpro_4096</name>
</gene>
<comment type="function">
    <text evidence="1">Single strand-specific metallo-endoribonuclease involved in late-stage 70S ribosome quality control and in maturation of the 3' terminus of the 16S rRNA.</text>
</comment>
<comment type="cofactor">
    <cofactor evidence="1">
        <name>Zn(2+)</name>
        <dbReference type="ChEBI" id="CHEBI:29105"/>
    </cofactor>
    <text evidence="1">Binds 1 zinc ion.</text>
</comment>
<comment type="subcellular location">
    <subcellularLocation>
        <location evidence="1">Cytoplasm</location>
    </subcellularLocation>
</comment>
<comment type="similarity">
    <text evidence="1">Belongs to the endoribonuclease YbeY family.</text>
</comment>
<dbReference type="EC" id="3.1.-.-" evidence="1"/>
<dbReference type="EMBL" id="CP000316">
    <property type="protein sequence ID" value="ABE45989.1"/>
    <property type="molecule type" value="Genomic_DNA"/>
</dbReference>
<dbReference type="RefSeq" id="WP_011484979.1">
    <property type="nucleotide sequence ID" value="NC_007948.1"/>
</dbReference>
<dbReference type="SMR" id="Q124Q3"/>
<dbReference type="STRING" id="296591.Bpro_4096"/>
<dbReference type="KEGG" id="pol:Bpro_4096"/>
<dbReference type="eggNOG" id="COG0319">
    <property type="taxonomic scope" value="Bacteria"/>
</dbReference>
<dbReference type="HOGENOM" id="CLU_106710_0_1_4"/>
<dbReference type="OrthoDB" id="9807740at2"/>
<dbReference type="Proteomes" id="UP000001983">
    <property type="component" value="Chromosome"/>
</dbReference>
<dbReference type="GO" id="GO:0005737">
    <property type="term" value="C:cytoplasm"/>
    <property type="evidence" value="ECO:0007669"/>
    <property type="project" value="UniProtKB-SubCell"/>
</dbReference>
<dbReference type="GO" id="GO:0004222">
    <property type="term" value="F:metalloendopeptidase activity"/>
    <property type="evidence" value="ECO:0007669"/>
    <property type="project" value="InterPro"/>
</dbReference>
<dbReference type="GO" id="GO:0004521">
    <property type="term" value="F:RNA endonuclease activity"/>
    <property type="evidence" value="ECO:0007669"/>
    <property type="project" value="UniProtKB-UniRule"/>
</dbReference>
<dbReference type="GO" id="GO:0008270">
    <property type="term" value="F:zinc ion binding"/>
    <property type="evidence" value="ECO:0007669"/>
    <property type="project" value="UniProtKB-UniRule"/>
</dbReference>
<dbReference type="GO" id="GO:0006364">
    <property type="term" value="P:rRNA processing"/>
    <property type="evidence" value="ECO:0007669"/>
    <property type="project" value="UniProtKB-UniRule"/>
</dbReference>
<dbReference type="Gene3D" id="3.40.390.30">
    <property type="entry name" value="Metalloproteases ('zincins'), catalytic domain"/>
    <property type="match status" value="1"/>
</dbReference>
<dbReference type="HAMAP" id="MF_00009">
    <property type="entry name" value="Endoribonucl_YbeY"/>
    <property type="match status" value="1"/>
</dbReference>
<dbReference type="InterPro" id="IPR023091">
    <property type="entry name" value="MetalPrtase_cat_dom_sf_prd"/>
</dbReference>
<dbReference type="InterPro" id="IPR002036">
    <property type="entry name" value="YbeY"/>
</dbReference>
<dbReference type="InterPro" id="IPR020549">
    <property type="entry name" value="YbeY_CS"/>
</dbReference>
<dbReference type="NCBIfam" id="TIGR00043">
    <property type="entry name" value="rRNA maturation RNase YbeY"/>
    <property type="match status" value="1"/>
</dbReference>
<dbReference type="PANTHER" id="PTHR46986">
    <property type="entry name" value="ENDORIBONUCLEASE YBEY, CHLOROPLASTIC"/>
    <property type="match status" value="1"/>
</dbReference>
<dbReference type="PANTHER" id="PTHR46986:SF1">
    <property type="entry name" value="ENDORIBONUCLEASE YBEY, CHLOROPLASTIC"/>
    <property type="match status" value="1"/>
</dbReference>
<dbReference type="Pfam" id="PF02130">
    <property type="entry name" value="YbeY"/>
    <property type="match status" value="1"/>
</dbReference>
<dbReference type="SUPFAM" id="SSF55486">
    <property type="entry name" value="Metalloproteases ('zincins'), catalytic domain"/>
    <property type="match status" value="1"/>
</dbReference>
<dbReference type="PROSITE" id="PS01306">
    <property type="entry name" value="UPF0054"/>
    <property type="match status" value="1"/>
</dbReference>
<name>YBEY_POLSJ</name>